<name>EATX2_ENTFL</name>
<geneLocation type="plasmid">
    <name>pRE25</name>
</geneLocation>
<evidence type="ECO:0000250" key="1"/>
<evidence type="ECO:0000305" key="2"/>
<organism>
    <name type="scientific">Enterococcus faecalis</name>
    <name type="common">Streptococcus faecalis</name>
    <dbReference type="NCBI Taxonomy" id="1351"/>
    <lineage>
        <taxon>Bacteria</taxon>
        <taxon>Bacillati</taxon>
        <taxon>Bacillota</taxon>
        <taxon>Bacilli</taxon>
        <taxon>Lactobacillales</taxon>
        <taxon>Enterococcaceae</taxon>
        <taxon>Enterococcus</taxon>
    </lineage>
</organism>
<accession>Q9AL19</accession>
<dbReference type="EMBL" id="X92945">
    <property type="protein sequence ID" value="CAC29173.1"/>
    <property type="molecule type" value="Genomic_DNA"/>
</dbReference>
<dbReference type="RefSeq" id="WP_002326825.1">
    <property type="nucleotide sequence ID" value="NZ_WVTT01000003.1"/>
</dbReference>
<dbReference type="RefSeq" id="YP_004033017.1">
    <property type="nucleotide sequence ID" value="NC_014726.1"/>
</dbReference>
<dbReference type="RefSeq" id="YP_783902.1">
    <property type="nucleotide sequence ID" value="NC_008445.1"/>
</dbReference>
<dbReference type="SMR" id="Q9AL19"/>
<dbReference type="GeneID" id="93222856"/>
<dbReference type="GO" id="GO:0015643">
    <property type="term" value="F:toxic substance binding"/>
    <property type="evidence" value="ECO:0007669"/>
    <property type="project" value="InterPro"/>
</dbReference>
<dbReference type="GO" id="GO:0031342">
    <property type="term" value="P:negative regulation of cell killing"/>
    <property type="evidence" value="ECO:0007669"/>
    <property type="project" value="InterPro"/>
</dbReference>
<dbReference type="GO" id="GO:0009636">
    <property type="term" value="P:response to toxic substance"/>
    <property type="evidence" value="ECO:0007669"/>
    <property type="project" value="InterPro"/>
</dbReference>
<dbReference type="Gene3D" id="1.10.8.130">
    <property type="match status" value="1"/>
</dbReference>
<dbReference type="InterPro" id="IPR035569">
    <property type="entry name" value="Antitoxin_epsilon/PezA_dom_sf"/>
</dbReference>
<dbReference type="InterPro" id="IPR015090">
    <property type="entry name" value="Epsilon_PezA_dom"/>
</dbReference>
<dbReference type="Pfam" id="PF08998">
    <property type="entry name" value="Epsilon_antitox"/>
    <property type="match status" value="1"/>
</dbReference>
<dbReference type="SUPFAM" id="SSF81710">
    <property type="entry name" value="Plasmid maintenance system epsilon/zeta, antidote epsilon subunit"/>
    <property type="match status" value="1"/>
</dbReference>
<comment type="function">
    <text evidence="1">Antitoxin component of a type II toxin-antitoxin (TA) system. Neutralizes the toxic effect of zeta toxin. Part of a postsegregational killing (PSK) system involved in the killing of plasmid-free cells. Continuous synthesis of the epsilon antitoxin is required to counteract the zeta toxin (By similarity).</text>
</comment>
<comment type="subunit">
    <text evidence="1">In the presence of the zeta toxin, forms an inactive PezA(2)PezT(2) heterotetramer.</text>
</comment>
<comment type="similarity">
    <text evidence="2">Belongs to the epsilon antitoxin family.</text>
</comment>
<reference key="1">
    <citation type="journal article" date="2001" name="Plasmid">
        <title>Sequence of the 50-kb conjugative multiresistance plasmid pRE25 from Enterococcus faecalis RE25.</title>
        <authorList>
            <person name="Schwarz F.V."/>
            <person name="Perreten V."/>
            <person name="Teuber M."/>
        </authorList>
    </citation>
    <scope>NUCLEOTIDE SEQUENCE [GENOMIC DNA]</scope>
    <source>
        <strain>RE25</strain>
    </source>
</reference>
<feature type="initiator methionine" description="Removed" evidence="1">
    <location>
        <position position="1"/>
    </location>
</feature>
<feature type="chain" id="PRO_0000221547" description="Antitoxin epsilon 2">
    <location>
        <begin position="2"/>
        <end position="90"/>
    </location>
</feature>
<keyword id="KW-0614">Plasmid</keyword>
<keyword id="KW-1277">Toxin-antitoxin system</keyword>
<sequence>MAVTYEKTFEIEIINELSASVYNRVLNYVLNHELDTKNTRLLEVNLLNQLEVAQEVDLFQQPFEELQAIHEYWRSMNQYSKQILTKEKVA</sequence>
<proteinExistence type="inferred from homology"/>
<protein>
    <recommendedName>
        <fullName>Antitoxin epsilon 2</fullName>
    </recommendedName>
</protein>